<proteinExistence type="inferred from homology"/>
<gene>
    <name type="ordered locus">Bphyt_0869</name>
</gene>
<feature type="chain" id="PRO_1000131009" description="Putative pre-16S rRNA nuclease">
    <location>
        <begin position="1"/>
        <end position="146"/>
    </location>
</feature>
<name>YQGF_PARPJ</name>
<sequence length="146" mass="16275">MSLPAGREATLLAFDYGEKRIGVAVGNSLTRRARPLVIVQNRSREYRFEAVGKLIAEWKPDALVVGLPFHPDGAPHEMTQLAKRFGNQLNGRFNLPVTWVDERYSSVEAKAEIRAGNGRADMLDAEAASIILQQYLDGLSDDHEFH</sequence>
<dbReference type="EC" id="3.1.-.-" evidence="1"/>
<dbReference type="EMBL" id="CP001052">
    <property type="protein sequence ID" value="ACD15290.1"/>
    <property type="molecule type" value="Genomic_DNA"/>
</dbReference>
<dbReference type="RefSeq" id="WP_012431922.1">
    <property type="nucleotide sequence ID" value="NC_010681.1"/>
</dbReference>
<dbReference type="SMR" id="B2T0I5"/>
<dbReference type="STRING" id="398527.Bphyt_0869"/>
<dbReference type="KEGG" id="bpy:Bphyt_0869"/>
<dbReference type="eggNOG" id="COG0816">
    <property type="taxonomic scope" value="Bacteria"/>
</dbReference>
<dbReference type="HOGENOM" id="CLU_098240_3_2_4"/>
<dbReference type="OrthoDB" id="9796140at2"/>
<dbReference type="Proteomes" id="UP000001739">
    <property type="component" value="Chromosome 1"/>
</dbReference>
<dbReference type="GO" id="GO:0005829">
    <property type="term" value="C:cytosol"/>
    <property type="evidence" value="ECO:0007669"/>
    <property type="project" value="TreeGrafter"/>
</dbReference>
<dbReference type="GO" id="GO:0004518">
    <property type="term" value="F:nuclease activity"/>
    <property type="evidence" value="ECO:0007669"/>
    <property type="project" value="UniProtKB-KW"/>
</dbReference>
<dbReference type="GO" id="GO:0000967">
    <property type="term" value="P:rRNA 5'-end processing"/>
    <property type="evidence" value="ECO:0007669"/>
    <property type="project" value="UniProtKB-UniRule"/>
</dbReference>
<dbReference type="CDD" id="cd16964">
    <property type="entry name" value="YqgF"/>
    <property type="match status" value="1"/>
</dbReference>
<dbReference type="Gene3D" id="3.30.420.140">
    <property type="entry name" value="YqgF/RNase H-like domain"/>
    <property type="match status" value="1"/>
</dbReference>
<dbReference type="HAMAP" id="MF_00651">
    <property type="entry name" value="Nuclease_YqgF"/>
    <property type="match status" value="1"/>
</dbReference>
<dbReference type="InterPro" id="IPR012337">
    <property type="entry name" value="RNaseH-like_sf"/>
</dbReference>
<dbReference type="InterPro" id="IPR005227">
    <property type="entry name" value="YqgF"/>
</dbReference>
<dbReference type="InterPro" id="IPR006641">
    <property type="entry name" value="YqgF/RNaseH-like_dom"/>
</dbReference>
<dbReference type="InterPro" id="IPR037027">
    <property type="entry name" value="YqgF/RNaseH-like_dom_sf"/>
</dbReference>
<dbReference type="NCBIfam" id="TIGR00250">
    <property type="entry name" value="RNAse_H_YqgF"/>
    <property type="match status" value="1"/>
</dbReference>
<dbReference type="PANTHER" id="PTHR33317">
    <property type="entry name" value="POLYNUCLEOTIDYL TRANSFERASE, RIBONUCLEASE H-LIKE SUPERFAMILY PROTEIN"/>
    <property type="match status" value="1"/>
</dbReference>
<dbReference type="PANTHER" id="PTHR33317:SF4">
    <property type="entry name" value="POLYNUCLEOTIDYL TRANSFERASE, RIBONUCLEASE H-LIKE SUPERFAMILY PROTEIN"/>
    <property type="match status" value="1"/>
</dbReference>
<dbReference type="Pfam" id="PF03652">
    <property type="entry name" value="RuvX"/>
    <property type="match status" value="1"/>
</dbReference>
<dbReference type="SMART" id="SM00732">
    <property type="entry name" value="YqgFc"/>
    <property type="match status" value="1"/>
</dbReference>
<dbReference type="SUPFAM" id="SSF53098">
    <property type="entry name" value="Ribonuclease H-like"/>
    <property type="match status" value="1"/>
</dbReference>
<organism>
    <name type="scientific">Paraburkholderia phytofirmans (strain DSM 17436 / LMG 22146 / PsJN)</name>
    <name type="common">Burkholderia phytofirmans</name>
    <dbReference type="NCBI Taxonomy" id="398527"/>
    <lineage>
        <taxon>Bacteria</taxon>
        <taxon>Pseudomonadati</taxon>
        <taxon>Pseudomonadota</taxon>
        <taxon>Betaproteobacteria</taxon>
        <taxon>Burkholderiales</taxon>
        <taxon>Burkholderiaceae</taxon>
        <taxon>Paraburkholderia</taxon>
    </lineage>
</organism>
<comment type="function">
    <text evidence="1">Could be a nuclease involved in processing of the 5'-end of pre-16S rRNA.</text>
</comment>
<comment type="subcellular location">
    <subcellularLocation>
        <location evidence="1">Cytoplasm</location>
    </subcellularLocation>
</comment>
<comment type="similarity">
    <text evidence="1">Belongs to the YqgF nuclease family.</text>
</comment>
<reference key="1">
    <citation type="journal article" date="2011" name="J. Bacteriol.">
        <title>Complete genome sequence of the plant growth-promoting endophyte Burkholderia phytofirmans strain PsJN.</title>
        <authorList>
            <person name="Weilharter A."/>
            <person name="Mitter B."/>
            <person name="Shin M.V."/>
            <person name="Chain P.S."/>
            <person name="Nowak J."/>
            <person name="Sessitsch A."/>
        </authorList>
    </citation>
    <scope>NUCLEOTIDE SEQUENCE [LARGE SCALE GENOMIC DNA]</scope>
    <source>
        <strain>DSM 17436 / LMG 22146 / PsJN</strain>
    </source>
</reference>
<accession>B2T0I5</accession>
<keyword id="KW-0963">Cytoplasm</keyword>
<keyword id="KW-0378">Hydrolase</keyword>
<keyword id="KW-0540">Nuclease</keyword>
<keyword id="KW-0690">Ribosome biogenesis</keyword>
<protein>
    <recommendedName>
        <fullName evidence="1">Putative pre-16S rRNA nuclease</fullName>
        <ecNumber evidence="1">3.1.-.-</ecNumber>
    </recommendedName>
</protein>
<evidence type="ECO:0000255" key="1">
    <source>
        <dbReference type="HAMAP-Rule" id="MF_00651"/>
    </source>
</evidence>